<feature type="chain" id="PRO_0000252502" description="Large ribosomal subunit protein bL19">
    <location>
        <begin position="1"/>
        <end position="122"/>
    </location>
</feature>
<keyword id="KW-0687">Ribonucleoprotein</keyword>
<keyword id="KW-0689">Ribosomal protein</keyword>
<name>RL19_CHLFF</name>
<comment type="function">
    <text evidence="1">This protein is located at the 30S-50S ribosomal subunit interface and may play a role in the structure and function of the aminoacyl-tRNA binding site.</text>
</comment>
<comment type="similarity">
    <text evidence="1">Belongs to the bacterial ribosomal protein bL19 family.</text>
</comment>
<proteinExistence type="inferred from homology"/>
<sequence>MGNLIKELQDEQLRKEDLEDFRVGDTIRVATKIVDGGKERTQVFQGTVMARRGGGAGETVCLHRVAYGEGMEKSFLLHSPKIVGIEVVKRGKVSRARLYYLKGKTGKAAKVKEYIGPRSSKK</sequence>
<dbReference type="EMBL" id="AP006861">
    <property type="protein sequence ID" value="BAE81128.1"/>
    <property type="molecule type" value="Genomic_DNA"/>
</dbReference>
<dbReference type="RefSeq" id="WP_011457908.1">
    <property type="nucleotide sequence ID" value="NC_007899.1"/>
</dbReference>
<dbReference type="SMR" id="Q255B0"/>
<dbReference type="STRING" id="264202.CF0356"/>
<dbReference type="KEGG" id="cfe:CF0356"/>
<dbReference type="eggNOG" id="COG0335">
    <property type="taxonomic scope" value="Bacteria"/>
</dbReference>
<dbReference type="HOGENOM" id="CLU_103507_2_1_0"/>
<dbReference type="OrthoDB" id="9803541at2"/>
<dbReference type="Proteomes" id="UP000001260">
    <property type="component" value="Chromosome"/>
</dbReference>
<dbReference type="GO" id="GO:0022625">
    <property type="term" value="C:cytosolic large ribosomal subunit"/>
    <property type="evidence" value="ECO:0007669"/>
    <property type="project" value="TreeGrafter"/>
</dbReference>
<dbReference type="GO" id="GO:0003735">
    <property type="term" value="F:structural constituent of ribosome"/>
    <property type="evidence" value="ECO:0007669"/>
    <property type="project" value="InterPro"/>
</dbReference>
<dbReference type="GO" id="GO:0006412">
    <property type="term" value="P:translation"/>
    <property type="evidence" value="ECO:0007669"/>
    <property type="project" value="UniProtKB-UniRule"/>
</dbReference>
<dbReference type="Gene3D" id="2.30.30.790">
    <property type="match status" value="1"/>
</dbReference>
<dbReference type="HAMAP" id="MF_00402">
    <property type="entry name" value="Ribosomal_bL19"/>
    <property type="match status" value="1"/>
</dbReference>
<dbReference type="InterPro" id="IPR001857">
    <property type="entry name" value="Ribosomal_bL19"/>
</dbReference>
<dbReference type="InterPro" id="IPR018257">
    <property type="entry name" value="Ribosomal_bL19_CS"/>
</dbReference>
<dbReference type="InterPro" id="IPR038657">
    <property type="entry name" value="Ribosomal_bL19_sf"/>
</dbReference>
<dbReference type="InterPro" id="IPR008991">
    <property type="entry name" value="Translation_prot_SH3-like_sf"/>
</dbReference>
<dbReference type="NCBIfam" id="TIGR01024">
    <property type="entry name" value="rplS_bact"/>
    <property type="match status" value="1"/>
</dbReference>
<dbReference type="PANTHER" id="PTHR15680:SF9">
    <property type="entry name" value="LARGE RIBOSOMAL SUBUNIT PROTEIN BL19M"/>
    <property type="match status" value="1"/>
</dbReference>
<dbReference type="PANTHER" id="PTHR15680">
    <property type="entry name" value="RIBOSOMAL PROTEIN L19"/>
    <property type="match status" value="1"/>
</dbReference>
<dbReference type="Pfam" id="PF01245">
    <property type="entry name" value="Ribosomal_L19"/>
    <property type="match status" value="1"/>
</dbReference>
<dbReference type="PIRSF" id="PIRSF002191">
    <property type="entry name" value="Ribosomal_L19"/>
    <property type="match status" value="1"/>
</dbReference>
<dbReference type="PRINTS" id="PR00061">
    <property type="entry name" value="RIBOSOMALL19"/>
</dbReference>
<dbReference type="SUPFAM" id="SSF50104">
    <property type="entry name" value="Translation proteins SH3-like domain"/>
    <property type="match status" value="1"/>
</dbReference>
<dbReference type="PROSITE" id="PS01015">
    <property type="entry name" value="RIBOSOMAL_L19"/>
    <property type="match status" value="1"/>
</dbReference>
<evidence type="ECO:0000255" key="1">
    <source>
        <dbReference type="HAMAP-Rule" id="MF_00402"/>
    </source>
</evidence>
<evidence type="ECO:0000305" key="2"/>
<accession>Q255B0</accession>
<reference key="1">
    <citation type="journal article" date="2006" name="DNA Res.">
        <title>Genome sequence of the cat pathogen, Chlamydophila felis.</title>
        <authorList>
            <person name="Azuma Y."/>
            <person name="Hirakawa H."/>
            <person name="Yamashita A."/>
            <person name="Cai Y."/>
            <person name="Rahman M.A."/>
            <person name="Suzuki H."/>
            <person name="Mitaku S."/>
            <person name="Toh H."/>
            <person name="Goto S."/>
            <person name="Murakami T."/>
            <person name="Sugi K."/>
            <person name="Hayashi H."/>
            <person name="Fukushi H."/>
            <person name="Hattori M."/>
            <person name="Kuhara S."/>
            <person name="Shirai M."/>
        </authorList>
    </citation>
    <scope>NUCLEOTIDE SEQUENCE [LARGE SCALE GENOMIC DNA]</scope>
    <source>
        <strain>Fe/C-56</strain>
    </source>
</reference>
<gene>
    <name evidence="1" type="primary">rplS</name>
    <name type="ordered locus">CF0356</name>
</gene>
<organism>
    <name type="scientific">Chlamydia felis (strain Fe/C-56)</name>
    <name type="common">Chlamydophila felis</name>
    <dbReference type="NCBI Taxonomy" id="264202"/>
    <lineage>
        <taxon>Bacteria</taxon>
        <taxon>Pseudomonadati</taxon>
        <taxon>Chlamydiota</taxon>
        <taxon>Chlamydiia</taxon>
        <taxon>Chlamydiales</taxon>
        <taxon>Chlamydiaceae</taxon>
        <taxon>Chlamydia/Chlamydophila group</taxon>
        <taxon>Chlamydia</taxon>
    </lineage>
</organism>
<protein>
    <recommendedName>
        <fullName evidence="1">Large ribosomal subunit protein bL19</fullName>
    </recommendedName>
    <alternativeName>
        <fullName evidence="2">50S ribosomal protein L19</fullName>
    </alternativeName>
</protein>